<keyword id="KW-0066">ATP synthesis</keyword>
<keyword id="KW-0067">ATP-binding</keyword>
<keyword id="KW-0997">Cell inner membrane</keyword>
<keyword id="KW-1003">Cell membrane</keyword>
<keyword id="KW-0139">CF(1)</keyword>
<keyword id="KW-0375">Hydrogen ion transport</keyword>
<keyword id="KW-0406">Ion transport</keyword>
<keyword id="KW-0472">Membrane</keyword>
<keyword id="KW-0547">Nucleotide-binding</keyword>
<keyword id="KW-1278">Translocase</keyword>
<keyword id="KW-0813">Transport</keyword>
<comment type="function">
    <text evidence="1">Produces ATP from ADP in the presence of a proton gradient across the membrane. The catalytic sites are hosted primarily by the beta subunits.</text>
</comment>
<comment type="catalytic activity">
    <reaction evidence="1">
        <text>ATP + H2O + 4 H(+)(in) = ADP + phosphate + 5 H(+)(out)</text>
        <dbReference type="Rhea" id="RHEA:57720"/>
        <dbReference type="ChEBI" id="CHEBI:15377"/>
        <dbReference type="ChEBI" id="CHEBI:15378"/>
        <dbReference type="ChEBI" id="CHEBI:30616"/>
        <dbReference type="ChEBI" id="CHEBI:43474"/>
        <dbReference type="ChEBI" id="CHEBI:456216"/>
        <dbReference type="EC" id="7.1.2.2"/>
    </reaction>
</comment>
<comment type="subunit">
    <text evidence="1">F-type ATPases have 2 components, CF(1) - the catalytic core - and CF(0) - the membrane proton channel. CF(1) has five subunits: alpha(3), beta(3), gamma(1), delta(1), epsilon(1). CF(0) has three main subunits: a(1), b(2) and c(9-12). The alpha and beta chains form an alternating ring which encloses part of the gamma chain. CF(1) is attached to CF(0) by a central stalk formed by the gamma and epsilon chains, while a peripheral stalk is formed by the delta and b chains.</text>
</comment>
<comment type="subcellular location">
    <subcellularLocation>
        <location evidence="1">Cell inner membrane</location>
        <topology evidence="1">Peripheral membrane protein</topology>
    </subcellularLocation>
</comment>
<comment type="similarity">
    <text evidence="1">Belongs to the ATPase alpha/beta chains family.</text>
</comment>
<proteinExistence type="inferred from homology"/>
<reference key="1">
    <citation type="journal article" date="2004" name="Nat. Biotechnol.">
        <title>The genome sequence of the capnophilic rumen bacterium Mannheimia succiniciproducens.</title>
        <authorList>
            <person name="Hong S.H."/>
            <person name="Kim J.S."/>
            <person name="Lee S.Y."/>
            <person name="In Y.H."/>
            <person name="Choi S.S."/>
            <person name="Rih J.-K."/>
            <person name="Kim C.H."/>
            <person name="Jeong H."/>
            <person name="Hur C.G."/>
            <person name="Kim J.J."/>
        </authorList>
    </citation>
    <scope>NUCLEOTIDE SEQUENCE [LARGE SCALE GENOMIC DNA]</scope>
    <source>
        <strain>KCTC 0769BP / MBEL55E</strain>
    </source>
</reference>
<sequence length="458" mass="49640">MSAGKIVQIIGAVIDVEFPENAVPKVYDALKVAEGGLTLEVQQQLGGGIVRCIAMGSSDGLKRGLSVSNTGKPISVPVGTKTLGRIMNVLGEPVDEQGPIGAEEEWAIHREAPSYEEQSNSTELLETGIKVIDLICPFAKGGKVGLFGGAGVGKTVNMMELIRNIAIEHSGFSVFAGVGERTREGNDFYHEMTDSNVLDKVSLVYGQMNEPPGNRLRVALTGLTMAEKFRDEGRDVLFFVDNIYRYTLAGTEVSALLGRMPSAVGYQPTLAEEMGVLQERITSTKTGSITSVQAVYVPADDLTDPSPATTFAHLDSTVVLSRNIASLGIYPAVDPLDSTSRQLDPQVVGQEHYDVARGVQGILQRYKELKDIIAILGMDELSEDDKLVVARARKIERFLSQPFFVAEVFTGSPGKYVSLKDTIRGFKGILEGEYDHIPEQAFYMVGSIEEVVEKAKNM</sequence>
<name>ATPB_MANSM</name>
<dbReference type="EC" id="7.1.2.2" evidence="1"/>
<dbReference type="EMBL" id="AE016827">
    <property type="protein sequence ID" value="AAU38953.1"/>
    <property type="molecule type" value="Genomic_DNA"/>
</dbReference>
<dbReference type="RefSeq" id="WP_011201491.1">
    <property type="nucleotide sequence ID" value="NC_006300.1"/>
</dbReference>
<dbReference type="SMR" id="Q65Q07"/>
<dbReference type="STRING" id="221988.MS2346"/>
<dbReference type="KEGG" id="msu:MS2346"/>
<dbReference type="eggNOG" id="COG0055">
    <property type="taxonomic scope" value="Bacteria"/>
</dbReference>
<dbReference type="HOGENOM" id="CLU_022398_0_2_6"/>
<dbReference type="OrthoDB" id="9801639at2"/>
<dbReference type="Proteomes" id="UP000000607">
    <property type="component" value="Chromosome"/>
</dbReference>
<dbReference type="GO" id="GO:0005886">
    <property type="term" value="C:plasma membrane"/>
    <property type="evidence" value="ECO:0007669"/>
    <property type="project" value="UniProtKB-SubCell"/>
</dbReference>
<dbReference type="GO" id="GO:0045259">
    <property type="term" value="C:proton-transporting ATP synthase complex"/>
    <property type="evidence" value="ECO:0007669"/>
    <property type="project" value="UniProtKB-KW"/>
</dbReference>
<dbReference type="GO" id="GO:0005524">
    <property type="term" value="F:ATP binding"/>
    <property type="evidence" value="ECO:0007669"/>
    <property type="project" value="UniProtKB-UniRule"/>
</dbReference>
<dbReference type="GO" id="GO:0016887">
    <property type="term" value="F:ATP hydrolysis activity"/>
    <property type="evidence" value="ECO:0007669"/>
    <property type="project" value="InterPro"/>
</dbReference>
<dbReference type="GO" id="GO:0046933">
    <property type="term" value="F:proton-transporting ATP synthase activity, rotational mechanism"/>
    <property type="evidence" value="ECO:0007669"/>
    <property type="project" value="UniProtKB-UniRule"/>
</dbReference>
<dbReference type="CDD" id="cd18110">
    <property type="entry name" value="ATP-synt_F1_beta_C"/>
    <property type="match status" value="1"/>
</dbReference>
<dbReference type="CDD" id="cd18115">
    <property type="entry name" value="ATP-synt_F1_beta_N"/>
    <property type="match status" value="1"/>
</dbReference>
<dbReference type="CDD" id="cd01133">
    <property type="entry name" value="F1-ATPase_beta_CD"/>
    <property type="match status" value="1"/>
</dbReference>
<dbReference type="FunFam" id="1.10.1140.10:FF:000001">
    <property type="entry name" value="ATP synthase subunit beta"/>
    <property type="match status" value="1"/>
</dbReference>
<dbReference type="FunFam" id="2.40.10.170:FF:000003">
    <property type="entry name" value="ATP synthase subunit beta"/>
    <property type="match status" value="1"/>
</dbReference>
<dbReference type="FunFam" id="3.40.50.300:FF:000004">
    <property type="entry name" value="ATP synthase subunit beta"/>
    <property type="match status" value="1"/>
</dbReference>
<dbReference type="Gene3D" id="2.40.10.170">
    <property type="match status" value="1"/>
</dbReference>
<dbReference type="Gene3D" id="1.10.1140.10">
    <property type="entry name" value="Bovine Mitochondrial F1-atpase, Atp Synthase Beta Chain, Chain D, domain 3"/>
    <property type="match status" value="1"/>
</dbReference>
<dbReference type="Gene3D" id="3.40.50.300">
    <property type="entry name" value="P-loop containing nucleotide triphosphate hydrolases"/>
    <property type="match status" value="1"/>
</dbReference>
<dbReference type="HAMAP" id="MF_01347">
    <property type="entry name" value="ATP_synth_beta_bact"/>
    <property type="match status" value="1"/>
</dbReference>
<dbReference type="InterPro" id="IPR003593">
    <property type="entry name" value="AAA+_ATPase"/>
</dbReference>
<dbReference type="InterPro" id="IPR055190">
    <property type="entry name" value="ATP-synt_VA_C"/>
</dbReference>
<dbReference type="InterPro" id="IPR005722">
    <property type="entry name" value="ATP_synth_F1_bsu"/>
</dbReference>
<dbReference type="InterPro" id="IPR020003">
    <property type="entry name" value="ATPase_a/bsu_AS"/>
</dbReference>
<dbReference type="InterPro" id="IPR050053">
    <property type="entry name" value="ATPase_alpha/beta_chains"/>
</dbReference>
<dbReference type="InterPro" id="IPR004100">
    <property type="entry name" value="ATPase_F1/V1/A1_a/bsu_N"/>
</dbReference>
<dbReference type="InterPro" id="IPR036121">
    <property type="entry name" value="ATPase_F1/V1/A1_a/bsu_N_sf"/>
</dbReference>
<dbReference type="InterPro" id="IPR000194">
    <property type="entry name" value="ATPase_F1/V1/A1_a/bsu_nucl-bd"/>
</dbReference>
<dbReference type="InterPro" id="IPR024034">
    <property type="entry name" value="ATPase_F1/V1_b/a_C"/>
</dbReference>
<dbReference type="InterPro" id="IPR027417">
    <property type="entry name" value="P-loop_NTPase"/>
</dbReference>
<dbReference type="NCBIfam" id="TIGR01039">
    <property type="entry name" value="atpD"/>
    <property type="match status" value="1"/>
</dbReference>
<dbReference type="PANTHER" id="PTHR15184">
    <property type="entry name" value="ATP SYNTHASE"/>
    <property type="match status" value="1"/>
</dbReference>
<dbReference type="PANTHER" id="PTHR15184:SF71">
    <property type="entry name" value="ATP SYNTHASE SUBUNIT BETA, MITOCHONDRIAL"/>
    <property type="match status" value="1"/>
</dbReference>
<dbReference type="Pfam" id="PF00006">
    <property type="entry name" value="ATP-synt_ab"/>
    <property type="match status" value="1"/>
</dbReference>
<dbReference type="Pfam" id="PF02874">
    <property type="entry name" value="ATP-synt_ab_N"/>
    <property type="match status" value="1"/>
</dbReference>
<dbReference type="Pfam" id="PF22919">
    <property type="entry name" value="ATP-synt_VA_C"/>
    <property type="match status" value="1"/>
</dbReference>
<dbReference type="SMART" id="SM00382">
    <property type="entry name" value="AAA"/>
    <property type="match status" value="1"/>
</dbReference>
<dbReference type="SUPFAM" id="SSF47917">
    <property type="entry name" value="C-terminal domain of alpha and beta subunits of F1 ATP synthase"/>
    <property type="match status" value="1"/>
</dbReference>
<dbReference type="SUPFAM" id="SSF50615">
    <property type="entry name" value="N-terminal domain of alpha and beta subunits of F1 ATP synthase"/>
    <property type="match status" value="1"/>
</dbReference>
<dbReference type="SUPFAM" id="SSF52540">
    <property type="entry name" value="P-loop containing nucleoside triphosphate hydrolases"/>
    <property type="match status" value="1"/>
</dbReference>
<dbReference type="PROSITE" id="PS00152">
    <property type="entry name" value="ATPASE_ALPHA_BETA"/>
    <property type="match status" value="1"/>
</dbReference>
<accession>Q65Q07</accession>
<feature type="chain" id="PRO_0000254295" description="ATP synthase subunit beta">
    <location>
        <begin position="1"/>
        <end position="458"/>
    </location>
</feature>
<feature type="binding site" evidence="1">
    <location>
        <begin position="148"/>
        <end position="155"/>
    </location>
    <ligand>
        <name>ATP</name>
        <dbReference type="ChEBI" id="CHEBI:30616"/>
    </ligand>
</feature>
<organism>
    <name type="scientific">Mannheimia succiniciproducens (strain KCTC 0769BP / MBEL55E)</name>
    <dbReference type="NCBI Taxonomy" id="221988"/>
    <lineage>
        <taxon>Bacteria</taxon>
        <taxon>Pseudomonadati</taxon>
        <taxon>Pseudomonadota</taxon>
        <taxon>Gammaproteobacteria</taxon>
        <taxon>Pasteurellales</taxon>
        <taxon>Pasteurellaceae</taxon>
        <taxon>Basfia</taxon>
    </lineage>
</organism>
<gene>
    <name evidence="1" type="primary">atpD</name>
    <name type="ordered locus">MS2346</name>
</gene>
<protein>
    <recommendedName>
        <fullName evidence="1">ATP synthase subunit beta</fullName>
        <ecNumber evidence="1">7.1.2.2</ecNumber>
    </recommendedName>
    <alternativeName>
        <fullName evidence="1">ATP synthase F1 sector subunit beta</fullName>
    </alternativeName>
    <alternativeName>
        <fullName evidence="1">F-ATPase subunit beta</fullName>
    </alternativeName>
</protein>
<evidence type="ECO:0000255" key="1">
    <source>
        <dbReference type="HAMAP-Rule" id="MF_01347"/>
    </source>
</evidence>